<evidence type="ECO:0000255" key="1">
    <source>
        <dbReference type="HAMAP-Rule" id="MF_00004"/>
    </source>
</evidence>
<dbReference type="EC" id="2.4.2.7" evidence="1"/>
<dbReference type="EMBL" id="AP011115">
    <property type="protein sequence ID" value="BAH55125.1"/>
    <property type="molecule type" value="Genomic_DNA"/>
</dbReference>
<dbReference type="RefSeq" id="WP_015890555.1">
    <property type="nucleotide sequence ID" value="NC_012522.1"/>
</dbReference>
<dbReference type="SMR" id="C1B4D6"/>
<dbReference type="STRING" id="632772.ROP_68780"/>
<dbReference type="KEGG" id="rop:ROP_68780"/>
<dbReference type="PATRIC" id="fig|632772.20.peg.7168"/>
<dbReference type="HOGENOM" id="CLU_063339_3_3_11"/>
<dbReference type="OrthoDB" id="9803963at2"/>
<dbReference type="UniPathway" id="UPA00588">
    <property type="reaction ID" value="UER00646"/>
</dbReference>
<dbReference type="Proteomes" id="UP000002212">
    <property type="component" value="Chromosome"/>
</dbReference>
<dbReference type="GO" id="GO:0005737">
    <property type="term" value="C:cytoplasm"/>
    <property type="evidence" value="ECO:0007669"/>
    <property type="project" value="UniProtKB-SubCell"/>
</dbReference>
<dbReference type="GO" id="GO:0002055">
    <property type="term" value="F:adenine binding"/>
    <property type="evidence" value="ECO:0007669"/>
    <property type="project" value="TreeGrafter"/>
</dbReference>
<dbReference type="GO" id="GO:0003999">
    <property type="term" value="F:adenine phosphoribosyltransferase activity"/>
    <property type="evidence" value="ECO:0007669"/>
    <property type="project" value="UniProtKB-UniRule"/>
</dbReference>
<dbReference type="GO" id="GO:0016208">
    <property type="term" value="F:AMP binding"/>
    <property type="evidence" value="ECO:0007669"/>
    <property type="project" value="TreeGrafter"/>
</dbReference>
<dbReference type="GO" id="GO:0006168">
    <property type="term" value="P:adenine salvage"/>
    <property type="evidence" value="ECO:0007669"/>
    <property type="project" value="InterPro"/>
</dbReference>
<dbReference type="GO" id="GO:0044209">
    <property type="term" value="P:AMP salvage"/>
    <property type="evidence" value="ECO:0007669"/>
    <property type="project" value="UniProtKB-UniRule"/>
</dbReference>
<dbReference type="GO" id="GO:0006166">
    <property type="term" value="P:purine ribonucleoside salvage"/>
    <property type="evidence" value="ECO:0007669"/>
    <property type="project" value="UniProtKB-KW"/>
</dbReference>
<dbReference type="CDD" id="cd06223">
    <property type="entry name" value="PRTases_typeI"/>
    <property type="match status" value="1"/>
</dbReference>
<dbReference type="FunFam" id="3.40.50.2020:FF:000004">
    <property type="entry name" value="Adenine phosphoribosyltransferase"/>
    <property type="match status" value="1"/>
</dbReference>
<dbReference type="Gene3D" id="3.40.50.2020">
    <property type="match status" value="1"/>
</dbReference>
<dbReference type="HAMAP" id="MF_00004">
    <property type="entry name" value="Aden_phosphoribosyltr"/>
    <property type="match status" value="1"/>
</dbReference>
<dbReference type="InterPro" id="IPR005764">
    <property type="entry name" value="Ade_phspho_trans"/>
</dbReference>
<dbReference type="InterPro" id="IPR000836">
    <property type="entry name" value="PRibTrfase_dom"/>
</dbReference>
<dbReference type="InterPro" id="IPR029057">
    <property type="entry name" value="PRTase-like"/>
</dbReference>
<dbReference type="InterPro" id="IPR050054">
    <property type="entry name" value="UPRTase/APRTase"/>
</dbReference>
<dbReference type="NCBIfam" id="NF002636">
    <property type="entry name" value="PRK02304.1-5"/>
    <property type="match status" value="1"/>
</dbReference>
<dbReference type="PANTHER" id="PTHR32315">
    <property type="entry name" value="ADENINE PHOSPHORIBOSYLTRANSFERASE"/>
    <property type="match status" value="1"/>
</dbReference>
<dbReference type="PANTHER" id="PTHR32315:SF3">
    <property type="entry name" value="ADENINE PHOSPHORIBOSYLTRANSFERASE"/>
    <property type="match status" value="1"/>
</dbReference>
<dbReference type="Pfam" id="PF00156">
    <property type="entry name" value="Pribosyltran"/>
    <property type="match status" value="1"/>
</dbReference>
<dbReference type="SUPFAM" id="SSF53271">
    <property type="entry name" value="PRTase-like"/>
    <property type="match status" value="1"/>
</dbReference>
<dbReference type="PROSITE" id="PS00103">
    <property type="entry name" value="PUR_PYR_PR_TRANSFER"/>
    <property type="match status" value="1"/>
</dbReference>
<comment type="function">
    <text evidence="1">Catalyzes a salvage reaction resulting in the formation of AMP, that is energically less costly than de novo synthesis.</text>
</comment>
<comment type="catalytic activity">
    <reaction evidence="1">
        <text>AMP + diphosphate = 5-phospho-alpha-D-ribose 1-diphosphate + adenine</text>
        <dbReference type="Rhea" id="RHEA:16609"/>
        <dbReference type="ChEBI" id="CHEBI:16708"/>
        <dbReference type="ChEBI" id="CHEBI:33019"/>
        <dbReference type="ChEBI" id="CHEBI:58017"/>
        <dbReference type="ChEBI" id="CHEBI:456215"/>
        <dbReference type="EC" id="2.4.2.7"/>
    </reaction>
</comment>
<comment type="pathway">
    <text evidence="1">Purine metabolism; AMP biosynthesis via salvage pathway; AMP from adenine: step 1/1.</text>
</comment>
<comment type="subunit">
    <text evidence="1">Homodimer.</text>
</comment>
<comment type="subcellular location">
    <subcellularLocation>
        <location evidence="1">Cytoplasm</location>
    </subcellularLocation>
</comment>
<comment type="similarity">
    <text evidence="1">Belongs to the purine/pyrimidine phosphoribosyltransferase family.</text>
</comment>
<reference key="1">
    <citation type="submission" date="2009-03" db="EMBL/GenBank/DDBJ databases">
        <title>Comparison of the complete genome sequences of Rhodococcus erythropolis PR4 and Rhodococcus opacus B4.</title>
        <authorList>
            <person name="Takarada H."/>
            <person name="Sekine M."/>
            <person name="Hosoyama A."/>
            <person name="Yamada R."/>
            <person name="Fujisawa T."/>
            <person name="Omata S."/>
            <person name="Shimizu A."/>
            <person name="Tsukatani N."/>
            <person name="Tanikawa S."/>
            <person name="Fujita N."/>
            <person name="Harayama S."/>
        </authorList>
    </citation>
    <scope>NUCLEOTIDE SEQUENCE [LARGE SCALE GENOMIC DNA]</scope>
    <source>
        <strain>B4</strain>
    </source>
</reference>
<accession>C1B4D6</accession>
<name>APT_RHOOB</name>
<protein>
    <recommendedName>
        <fullName evidence="1">Adenine phosphoribosyltransferase</fullName>
        <shortName evidence="1">APRT</shortName>
        <ecNumber evidence="1">2.4.2.7</ecNumber>
    </recommendedName>
</protein>
<feature type="chain" id="PRO_1000116252" description="Adenine phosphoribosyltransferase">
    <location>
        <begin position="1"/>
        <end position="177"/>
    </location>
</feature>
<proteinExistence type="inferred from homology"/>
<gene>
    <name evidence="1" type="primary">apt</name>
    <name type="ordered locus">ROP_68780</name>
</gene>
<keyword id="KW-0963">Cytoplasm</keyword>
<keyword id="KW-0328">Glycosyltransferase</keyword>
<keyword id="KW-0660">Purine salvage</keyword>
<keyword id="KW-0808">Transferase</keyword>
<sequence length="177" mass="18143">MTDHSAARDAVTRLTRWADDFPQPGVRFADLTPVFSDADGFRVVVDALAACAPATEVIAAVDARGFLLGGGVARELGSGVVAVRKSGKLPPPVLSQSYTLEYGTATLEIPAGSIGLDGRSVLVVDDVLATGGTLDATARLVESAGARVIGIAVVLEIAALGGRERLGKYPLTSLVTV</sequence>
<organism>
    <name type="scientific">Rhodococcus opacus (strain B4)</name>
    <dbReference type="NCBI Taxonomy" id="632772"/>
    <lineage>
        <taxon>Bacteria</taxon>
        <taxon>Bacillati</taxon>
        <taxon>Actinomycetota</taxon>
        <taxon>Actinomycetes</taxon>
        <taxon>Mycobacteriales</taxon>
        <taxon>Nocardiaceae</taxon>
        <taxon>Rhodococcus</taxon>
    </lineage>
</organism>